<gene>
    <name evidence="1" type="primary">nadX</name>
    <name type="ordered locus">BURPS1106A_A1241</name>
</gene>
<dbReference type="EC" id="1.4.1.21" evidence="1"/>
<dbReference type="EMBL" id="CP000573">
    <property type="protein sequence ID" value="ABN94857.1"/>
    <property type="molecule type" value="Genomic_DNA"/>
</dbReference>
<dbReference type="RefSeq" id="WP_004195445.1">
    <property type="nucleotide sequence ID" value="NC_009078.1"/>
</dbReference>
<dbReference type="SMR" id="A3P4L6"/>
<dbReference type="KEGG" id="bpl:BURPS1106A_A1241"/>
<dbReference type="HOGENOM" id="CLU_089550_0_0_4"/>
<dbReference type="UniPathway" id="UPA00253">
    <property type="reaction ID" value="UER00456"/>
</dbReference>
<dbReference type="Proteomes" id="UP000006738">
    <property type="component" value="Chromosome II"/>
</dbReference>
<dbReference type="GO" id="GO:0033735">
    <property type="term" value="F:aspartate dehydrogenase activity"/>
    <property type="evidence" value="ECO:0007669"/>
    <property type="project" value="UniProtKB-EC"/>
</dbReference>
<dbReference type="GO" id="GO:0051287">
    <property type="term" value="F:NAD binding"/>
    <property type="evidence" value="ECO:0007669"/>
    <property type="project" value="UniProtKB-UniRule"/>
</dbReference>
<dbReference type="GO" id="GO:0050661">
    <property type="term" value="F:NADP binding"/>
    <property type="evidence" value="ECO:0007669"/>
    <property type="project" value="UniProtKB-UniRule"/>
</dbReference>
<dbReference type="GO" id="GO:0016639">
    <property type="term" value="F:oxidoreductase activity, acting on the CH-NH2 group of donors, NAD or NADP as acceptor"/>
    <property type="evidence" value="ECO:0007669"/>
    <property type="project" value="UniProtKB-UniRule"/>
</dbReference>
<dbReference type="GO" id="GO:0009435">
    <property type="term" value="P:NAD biosynthetic process"/>
    <property type="evidence" value="ECO:0007669"/>
    <property type="project" value="UniProtKB-UniRule"/>
</dbReference>
<dbReference type="Gene3D" id="3.30.360.10">
    <property type="entry name" value="Dihydrodipicolinate Reductase, domain 2"/>
    <property type="match status" value="1"/>
</dbReference>
<dbReference type="Gene3D" id="3.40.50.720">
    <property type="entry name" value="NAD(P)-binding Rossmann-like Domain"/>
    <property type="match status" value="1"/>
</dbReference>
<dbReference type="HAMAP" id="MF_01265">
    <property type="entry name" value="NadX"/>
    <property type="match status" value="1"/>
</dbReference>
<dbReference type="InterPro" id="IPR005106">
    <property type="entry name" value="Asp/hSer_DH_NAD-bd"/>
</dbReference>
<dbReference type="InterPro" id="IPR002811">
    <property type="entry name" value="Asp_DH"/>
</dbReference>
<dbReference type="InterPro" id="IPR020626">
    <property type="entry name" value="Asp_DH_prok"/>
</dbReference>
<dbReference type="InterPro" id="IPR011182">
    <property type="entry name" value="L-Asp_DH"/>
</dbReference>
<dbReference type="InterPro" id="IPR036291">
    <property type="entry name" value="NAD(P)-bd_dom_sf"/>
</dbReference>
<dbReference type="NCBIfam" id="NF009826">
    <property type="entry name" value="PRK13303.1-1"/>
    <property type="match status" value="1"/>
</dbReference>
<dbReference type="NCBIfam" id="NF009827">
    <property type="entry name" value="PRK13303.1-2"/>
    <property type="match status" value="1"/>
</dbReference>
<dbReference type="NCBIfam" id="NF009828">
    <property type="entry name" value="PRK13303.1-3"/>
    <property type="match status" value="1"/>
</dbReference>
<dbReference type="PANTHER" id="PTHR31873:SF6">
    <property type="entry name" value="ASPARTATE DEHYDROGENASE DOMAIN-CONTAINING PROTEIN"/>
    <property type="match status" value="1"/>
</dbReference>
<dbReference type="PANTHER" id="PTHR31873">
    <property type="entry name" value="L-ASPARTATE DEHYDROGENASE-RELATED"/>
    <property type="match status" value="1"/>
</dbReference>
<dbReference type="Pfam" id="PF01958">
    <property type="entry name" value="Asp_DH_C"/>
    <property type="match status" value="1"/>
</dbReference>
<dbReference type="Pfam" id="PF03447">
    <property type="entry name" value="NAD_binding_3"/>
    <property type="match status" value="1"/>
</dbReference>
<dbReference type="PIRSF" id="PIRSF005227">
    <property type="entry name" value="Asp_dh_NAD_syn"/>
    <property type="match status" value="1"/>
</dbReference>
<dbReference type="SUPFAM" id="SSF55347">
    <property type="entry name" value="Glyceraldehyde-3-phosphate dehydrogenase-like, C-terminal domain"/>
    <property type="match status" value="1"/>
</dbReference>
<dbReference type="SUPFAM" id="SSF51735">
    <property type="entry name" value="NAD(P)-binding Rossmann-fold domains"/>
    <property type="match status" value="1"/>
</dbReference>
<feature type="chain" id="PRO_1000067297" description="L-aspartate dehydrogenase">
    <location>
        <begin position="1"/>
        <end position="271"/>
    </location>
</feature>
<feature type="active site" evidence="1">
    <location>
        <position position="224"/>
    </location>
</feature>
<feature type="binding site" evidence="1">
    <location>
        <position position="128"/>
    </location>
    <ligand>
        <name>NAD(+)</name>
        <dbReference type="ChEBI" id="CHEBI:57540"/>
    </ligand>
</feature>
<feature type="binding site" evidence="1">
    <location>
        <position position="194"/>
    </location>
    <ligand>
        <name>NAD(+)</name>
        <dbReference type="ChEBI" id="CHEBI:57540"/>
    </ligand>
</feature>
<name>ASPD_BURP0</name>
<reference key="1">
    <citation type="journal article" date="2010" name="Genome Biol. Evol.">
        <title>Continuing evolution of Burkholderia mallei through genome reduction and large-scale rearrangements.</title>
        <authorList>
            <person name="Losada L."/>
            <person name="Ronning C.M."/>
            <person name="DeShazer D."/>
            <person name="Woods D."/>
            <person name="Fedorova N."/>
            <person name="Kim H.S."/>
            <person name="Shabalina S.A."/>
            <person name="Pearson T.R."/>
            <person name="Brinkac L."/>
            <person name="Tan P."/>
            <person name="Nandi T."/>
            <person name="Crabtree J."/>
            <person name="Badger J."/>
            <person name="Beckstrom-Sternberg S."/>
            <person name="Saqib M."/>
            <person name="Schutzer S.E."/>
            <person name="Keim P."/>
            <person name="Nierman W.C."/>
        </authorList>
    </citation>
    <scope>NUCLEOTIDE SEQUENCE [LARGE SCALE GENOMIC DNA]</scope>
    <source>
        <strain>1106a</strain>
    </source>
</reference>
<proteinExistence type="inferred from homology"/>
<sequence>MRNAHAPVDVAMIGFGAIGAAVYRAVEHDAALRVAHVIVPEHQCDAVRGALGERVDVVSSVDALACRPQFALECAGHGALVDHVVPLLKAGTDCAVASIGALSDLALLDALSNAADAGGATLTLLSGAIGGIDALAAARQGGLDEVRYIGRKPPLGWLGTPAEAICDLRAMAAEQTIFEGSARDAAQLYPRNANVAATVALAGVGLDATRVCLIADPAVTRNVHRIVARGAFGEMSIEMSGKPLPDNPKTSALTAFSAIRALRNRASHCVI</sequence>
<comment type="function">
    <text evidence="1">Specifically catalyzes the NAD or NADP-dependent dehydrogenation of L-aspartate to iminoaspartate.</text>
</comment>
<comment type="catalytic activity">
    <reaction evidence="1">
        <text>L-aspartate + NADP(+) + H2O = oxaloacetate + NH4(+) + NADPH + H(+)</text>
        <dbReference type="Rhea" id="RHEA:11784"/>
        <dbReference type="ChEBI" id="CHEBI:15377"/>
        <dbReference type="ChEBI" id="CHEBI:15378"/>
        <dbReference type="ChEBI" id="CHEBI:16452"/>
        <dbReference type="ChEBI" id="CHEBI:28938"/>
        <dbReference type="ChEBI" id="CHEBI:29991"/>
        <dbReference type="ChEBI" id="CHEBI:57783"/>
        <dbReference type="ChEBI" id="CHEBI:58349"/>
        <dbReference type="EC" id="1.4.1.21"/>
    </reaction>
</comment>
<comment type="catalytic activity">
    <reaction evidence="1">
        <text>L-aspartate + NAD(+) + H2O = oxaloacetate + NH4(+) + NADH + H(+)</text>
        <dbReference type="Rhea" id="RHEA:11788"/>
        <dbReference type="ChEBI" id="CHEBI:15377"/>
        <dbReference type="ChEBI" id="CHEBI:15378"/>
        <dbReference type="ChEBI" id="CHEBI:16452"/>
        <dbReference type="ChEBI" id="CHEBI:28938"/>
        <dbReference type="ChEBI" id="CHEBI:29991"/>
        <dbReference type="ChEBI" id="CHEBI:57540"/>
        <dbReference type="ChEBI" id="CHEBI:57945"/>
        <dbReference type="EC" id="1.4.1.21"/>
    </reaction>
</comment>
<comment type="pathway">
    <text evidence="1">Cofactor biosynthesis; NAD(+) biosynthesis; iminoaspartate from L-aspartate (dehydrogenase route): step 1/1.</text>
</comment>
<comment type="miscellaneous">
    <text evidence="1">The iminoaspartate product is unstable in aqueous solution and can decompose to oxaloacetate and ammonia.</text>
</comment>
<comment type="similarity">
    <text evidence="1">Belongs to the L-aspartate dehydrogenase family.</text>
</comment>
<organism>
    <name type="scientific">Burkholderia pseudomallei (strain 1106a)</name>
    <dbReference type="NCBI Taxonomy" id="357348"/>
    <lineage>
        <taxon>Bacteria</taxon>
        <taxon>Pseudomonadati</taxon>
        <taxon>Pseudomonadota</taxon>
        <taxon>Betaproteobacteria</taxon>
        <taxon>Burkholderiales</taxon>
        <taxon>Burkholderiaceae</taxon>
        <taxon>Burkholderia</taxon>
        <taxon>pseudomallei group</taxon>
    </lineage>
</organism>
<evidence type="ECO:0000255" key="1">
    <source>
        <dbReference type="HAMAP-Rule" id="MF_01265"/>
    </source>
</evidence>
<protein>
    <recommendedName>
        <fullName evidence="1">L-aspartate dehydrogenase</fullName>
        <ecNumber evidence="1">1.4.1.21</ecNumber>
    </recommendedName>
</protein>
<keyword id="KW-0520">NAD</keyword>
<keyword id="KW-0521">NADP</keyword>
<keyword id="KW-0560">Oxidoreductase</keyword>
<keyword id="KW-0662">Pyridine nucleotide biosynthesis</keyword>
<accession>A3P4L6</accession>